<dbReference type="EMBL" id="L16533">
    <property type="protein sequence ID" value="AAC37362.1"/>
    <property type="molecule type" value="Unassigned_DNA"/>
</dbReference>
<dbReference type="EMBL" id="Z68329">
    <property type="protein sequence ID" value="CAA92715.1"/>
    <property type="molecule type" value="Genomic_DNA"/>
</dbReference>
<dbReference type="EMBL" id="Z70202">
    <property type="protein sequence ID" value="CAA94097.1"/>
    <property type="molecule type" value="Genomic_DNA"/>
</dbReference>
<dbReference type="EMBL" id="BK006938">
    <property type="protein sequence ID" value="DAA12098.1"/>
    <property type="molecule type" value="Genomic_DNA"/>
</dbReference>
<dbReference type="PIR" id="S67315">
    <property type="entry name" value="S67315"/>
</dbReference>
<dbReference type="RefSeq" id="NP_010544.3">
    <property type="nucleotide sequence ID" value="NM_001180566.3"/>
</dbReference>
<dbReference type="SMR" id="P33416"/>
<dbReference type="BioGRID" id="32308">
    <property type="interactions" value="649"/>
</dbReference>
<dbReference type="FunCoup" id="P33416">
    <property type="interactions" value="285"/>
</dbReference>
<dbReference type="IntAct" id="P33416">
    <property type="interactions" value="8"/>
</dbReference>
<dbReference type="STRING" id="4932.YDR258C"/>
<dbReference type="iPTMnet" id="P33416"/>
<dbReference type="PaxDb" id="4932-YDR258C"/>
<dbReference type="PeptideAtlas" id="P33416"/>
<dbReference type="TopDownProteomics" id="P33416"/>
<dbReference type="EnsemblFungi" id="YDR258C_mRNA">
    <property type="protein sequence ID" value="YDR258C"/>
    <property type="gene ID" value="YDR258C"/>
</dbReference>
<dbReference type="GeneID" id="851845"/>
<dbReference type="KEGG" id="sce:YDR258C"/>
<dbReference type="AGR" id="SGD:S000002666"/>
<dbReference type="SGD" id="S000002666">
    <property type="gene designation" value="HSP78"/>
</dbReference>
<dbReference type="VEuPathDB" id="FungiDB:YDR258C"/>
<dbReference type="eggNOG" id="KOG1051">
    <property type="taxonomic scope" value="Eukaryota"/>
</dbReference>
<dbReference type="HOGENOM" id="CLU_005070_4_0_1"/>
<dbReference type="InParanoid" id="P33416"/>
<dbReference type="OMA" id="VSKMMQG"/>
<dbReference type="OrthoDB" id="47330at2759"/>
<dbReference type="BioCyc" id="YEAST:G3O-29829-MONOMER"/>
<dbReference type="BioGRID-ORCS" id="851845">
    <property type="hits" value="0 hits in 10 CRISPR screens"/>
</dbReference>
<dbReference type="PRO" id="PR:P33416"/>
<dbReference type="Proteomes" id="UP000002311">
    <property type="component" value="Chromosome IV"/>
</dbReference>
<dbReference type="RNAct" id="P33416">
    <property type="molecule type" value="protein"/>
</dbReference>
<dbReference type="GO" id="GO:0005737">
    <property type="term" value="C:cytoplasm"/>
    <property type="evidence" value="ECO:0000318"/>
    <property type="project" value="GO_Central"/>
</dbReference>
<dbReference type="GO" id="GO:0005759">
    <property type="term" value="C:mitochondrial matrix"/>
    <property type="evidence" value="ECO:0000314"/>
    <property type="project" value="SGD"/>
</dbReference>
<dbReference type="GO" id="GO:0005739">
    <property type="term" value="C:mitochondrion"/>
    <property type="evidence" value="ECO:0007005"/>
    <property type="project" value="SGD"/>
</dbReference>
<dbReference type="GO" id="GO:0005524">
    <property type="term" value="F:ATP binding"/>
    <property type="evidence" value="ECO:0007669"/>
    <property type="project" value="UniProtKB-KW"/>
</dbReference>
<dbReference type="GO" id="GO:0016887">
    <property type="term" value="F:ATP hydrolysis activity"/>
    <property type="evidence" value="ECO:0000314"/>
    <property type="project" value="SGD"/>
</dbReference>
<dbReference type="GO" id="GO:0051787">
    <property type="term" value="F:misfolded protein binding"/>
    <property type="evidence" value="ECO:0000314"/>
    <property type="project" value="SGD"/>
</dbReference>
<dbReference type="GO" id="GO:0034605">
    <property type="term" value="P:cellular response to heat"/>
    <property type="evidence" value="ECO:0000315"/>
    <property type="project" value="SGD"/>
</dbReference>
<dbReference type="GO" id="GO:0000002">
    <property type="term" value="P:mitochondrial genome maintenance"/>
    <property type="evidence" value="ECO:0000316"/>
    <property type="project" value="SGD"/>
</dbReference>
<dbReference type="GO" id="GO:0042026">
    <property type="term" value="P:protein refolding"/>
    <property type="evidence" value="ECO:0000314"/>
    <property type="project" value="SGD"/>
</dbReference>
<dbReference type="GO" id="GO:0050821">
    <property type="term" value="P:protein stabilization"/>
    <property type="evidence" value="ECO:0000315"/>
    <property type="project" value="SGD"/>
</dbReference>
<dbReference type="GO" id="GO:0043335">
    <property type="term" value="P:protein unfolding"/>
    <property type="evidence" value="ECO:0000315"/>
    <property type="project" value="SGD"/>
</dbReference>
<dbReference type="CDD" id="cd00009">
    <property type="entry name" value="AAA"/>
    <property type="match status" value="1"/>
</dbReference>
<dbReference type="CDD" id="cd19499">
    <property type="entry name" value="RecA-like_ClpB_Hsp104-like"/>
    <property type="match status" value="1"/>
</dbReference>
<dbReference type="FunFam" id="1.10.8.60:FF:000017">
    <property type="entry name" value="ATP-dependent chaperone ClpB"/>
    <property type="match status" value="1"/>
</dbReference>
<dbReference type="FunFam" id="3.40.50.300:FF:000120">
    <property type="entry name" value="ATP-dependent chaperone ClpB"/>
    <property type="match status" value="1"/>
</dbReference>
<dbReference type="FunFam" id="3.40.50.300:FF:000025">
    <property type="entry name" value="ATP-dependent Clp protease subunit"/>
    <property type="match status" value="1"/>
</dbReference>
<dbReference type="FunFam" id="3.40.50.300:FF:000010">
    <property type="entry name" value="Chaperone clpB 1, putative"/>
    <property type="match status" value="1"/>
</dbReference>
<dbReference type="Gene3D" id="1.10.8.60">
    <property type="match status" value="1"/>
</dbReference>
<dbReference type="Gene3D" id="3.40.50.300">
    <property type="entry name" value="P-loop containing nucleotide triphosphate hydrolases"/>
    <property type="match status" value="3"/>
</dbReference>
<dbReference type="InterPro" id="IPR003593">
    <property type="entry name" value="AAA+_ATPase"/>
</dbReference>
<dbReference type="InterPro" id="IPR003959">
    <property type="entry name" value="ATPase_AAA_core"/>
</dbReference>
<dbReference type="InterPro" id="IPR019489">
    <property type="entry name" value="Clp_ATPase_C"/>
</dbReference>
<dbReference type="InterPro" id="IPR001270">
    <property type="entry name" value="ClpA/B"/>
</dbReference>
<dbReference type="InterPro" id="IPR018368">
    <property type="entry name" value="ClpA/B_CS1"/>
</dbReference>
<dbReference type="InterPro" id="IPR028299">
    <property type="entry name" value="ClpA/B_CS2"/>
</dbReference>
<dbReference type="InterPro" id="IPR041546">
    <property type="entry name" value="ClpA/ClpB_AAA_lid"/>
</dbReference>
<dbReference type="InterPro" id="IPR050130">
    <property type="entry name" value="ClpA_ClpB"/>
</dbReference>
<dbReference type="InterPro" id="IPR027417">
    <property type="entry name" value="P-loop_NTPase"/>
</dbReference>
<dbReference type="PANTHER" id="PTHR11638">
    <property type="entry name" value="ATP-DEPENDENT CLP PROTEASE"/>
    <property type="match status" value="1"/>
</dbReference>
<dbReference type="PANTHER" id="PTHR11638:SF176">
    <property type="entry name" value="HEAT SHOCK PROTEIN 78, MITOCHONDRIAL"/>
    <property type="match status" value="1"/>
</dbReference>
<dbReference type="Pfam" id="PF00004">
    <property type="entry name" value="AAA"/>
    <property type="match status" value="1"/>
</dbReference>
<dbReference type="Pfam" id="PF07724">
    <property type="entry name" value="AAA_2"/>
    <property type="match status" value="1"/>
</dbReference>
<dbReference type="Pfam" id="PF17871">
    <property type="entry name" value="AAA_lid_9"/>
    <property type="match status" value="1"/>
</dbReference>
<dbReference type="Pfam" id="PF10431">
    <property type="entry name" value="ClpB_D2-small"/>
    <property type="match status" value="1"/>
</dbReference>
<dbReference type="PRINTS" id="PR00300">
    <property type="entry name" value="CLPPROTEASEA"/>
</dbReference>
<dbReference type="SMART" id="SM00382">
    <property type="entry name" value="AAA"/>
    <property type="match status" value="2"/>
</dbReference>
<dbReference type="SMART" id="SM01086">
    <property type="entry name" value="ClpB_D2-small"/>
    <property type="match status" value="1"/>
</dbReference>
<dbReference type="SUPFAM" id="SSF52540">
    <property type="entry name" value="P-loop containing nucleoside triphosphate hydrolases"/>
    <property type="match status" value="2"/>
</dbReference>
<dbReference type="PROSITE" id="PS00870">
    <property type="entry name" value="CLPAB_1"/>
    <property type="match status" value="1"/>
</dbReference>
<dbReference type="PROSITE" id="PS00871">
    <property type="entry name" value="CLPAB_2"/>
    <property type="match status" value="1"/>
</dbReference>
<organism>
    <name type="scientific">Saccharomyces cerevisiae (strain ATCC 204508 / S288c)</name>
    <name type="common">Baker's yeast</name>
    <dbReference type="NCBI Taxonomy" id="559292"/>
    <lineage>
        <taxon>Eukaryota</taxon>
        <taxon>Fungi</taxon>
        <taxon>Dikarya</taxon>
        <taxon>Ascomycota</taxon>
        <taxon>Saccharomycotina</taxon>
        <taxon>Saccharomycetes</taxon>
        <taxon>Saccharomycetales</taxon>
        <taxon>Saccharomycetaceae</taxon>
        <taxon>Saccharomyces</taxon>
    </lineage>
</organism>
<sequence>MLRQATKAPIQKYLQRTQLLRRSTPRIYTIVQCKRSICSFNARPRVANKLLSDIKTNALNEVAISTCALKSSYGLPNFKRTYVQMRMDPNQQPEKPALEQFGTNLTKLARDGKLDPVIGRDEEIARAIQILSRRTKNNPCLIGRAGVGKTALIDGLAQRIVAGEVPDSLKDKDLVALDLGSLIAGAKYRGEFEERLKKVLEEIDKANGKVIVFIDEVHMLLGLGKTDGSMDASNILKPKLARGLRCISATTLDEFKIIEKDPALSRRFQPILLNEPSVSDTISILRGLKERYEVHHGVRITDTALVSAAVLSNRYITDRFLPDKAIDLVDEACAVLRLQHESKPDEIQKLDRAIMKIQIELESLKKETDPVSVERREALEKDLEMKNDELNRLTKIWDAERAEIESIKNAKANLEQARIELEKCQREGDYTKASELRYSRIPDLEKKVALSEKSKDGDKVNLLHDSVTSDDISKVVAKMTGIPTETVMKGDKDRLLYMENSLKERVVGQDEAIAAISDAVRLQRAGLTSEKRPIASFMFLGPTGTGKTELTKALAEFLFDDESNVIRFDMSEFQEKHTVSRLIGAPPGYVLSESGGQLTEAVRRKPYAVVLFDEFEKAHPDVSKLLLQVLDEGKLTDSLGHHVDFRNTIIVMTSNIGQDILLNDTKLGDDGKIDTATKNKVIEAMKRSYPPEFINRIDDILVFNRLSKKVLRSIVDIRIAEIQDRLAEKRMKIDLTDEAKDWLTDKGYDQLYGARPLNRLIHRQILNSMATFLLKGQIRNGETVRVVVKDTKLVVLPNHEEGEVVEEEAEK</sequence>
<proteinExistence type="evidence at protein level"/>
<gene>
    <name type="primary">HSP78</name>
    <name type="ordered locus">YDR258C</name>
    <name type="ORF">YD9320A.08C</name>
</gene>
<keyword id="KW-0067">ATP-binding</keyword>
<keyword id="KW-0143">Chaperone</keyword>
<keyword id="KW-0175">Coiled coil</keyword>
<keyword id="KW-0903">Direct protein sequencing</keyword>
<keyword id="KW-0496">Mitochondrion</keyword>
<keyword id="KW-0547">Nucleotide-binding</keyword>
<keyword id="KW-1185">Reference proteome</keyword>
<keyword id="KW-0677">Repeat</keyword>
<keyword id="KW-0346">Stress response</keyword>
<keyword id="KW-0809">Transit peptide</keyword>
<accession>P33416</accession>
<accession>D6VSN8</accession>
<accession>Q12137</accession>
<feature type="transit peptide" description="Mitochondrion" evidence="1">
    <location>
        <begin position="1"/>
        <end position="44"/>
    </location>
</feature>
<feature type="chain" id="PRO_0000005500" description="Heat shock protein 78, mitochondrial">
    <location>
        <begin position="45"/>
        <end position="811"/>
    </location>
</feature>
<feature type="region of interest" description="NBD1">
    <location>
        <begin position="98"/>
        <end position="344"/>
    </location>
</feature>
<feature type="region of interest" description="NBD2">
    <location>
        <begin position="467"/>
        <end position="658"/>
    </location>
</feature>
<feature type="coiled-coil region" evidence="1">
    <location>
        <begin position="345"/>
        <end position="430"/>
    </location>
</feature>
<feature type="binding site" evidence="1">
    <location>
        <begin position="143"/>
        <end position="150"/>
    </location>
    <ligand>
        <name>ATP</name>
        <dbReference type="ChEBI" id="CHEBI:30616"/>
        <label>1</label>
    </ligand>
</feature>
<feature type="binding site" evidence="1">
    <location>
        <begin position="541"/>
        <end position="548"/>
    </location>
    <ligand>
        <name>ATP</name>
        <dbReference type="ChEBI" id="CHEBI:30616"/>
        <label>2</label>
    </ligand>
</feature>
<feature type="mutagenesis site" description="Abolishes ATPase activity." evidence="3">
    <original>K</original>
    <variation>T</variation>
    <location>
        <position position="149"/>
    </location>
</feature>
<feature type="mutagenesis site" description="Impairs oligomerization. Reduces ATPase activity by 92%." evidence="3">
    <original>K</original>
    <variation>T</variation>
    <location>
        <position position="547"/>
    </location>
</feature>
<feature type="sequence conflict" description="In Ref. 1; AAC37362." evidence="16" ref="1">
    <original>T</original>
    <variation>K</variation>
    <location>
        <position position="106"/>
    </location>
</feature>
<feature type="sequence conflict" description="In Ref. 1; AAC37362." evidence="16" ref="1">
    <original>R</original>
    <variation>A</variation>
    <location>
        <position position="245"/>
    </location>
</feature>
<feature type="sequence conflict" description="In Ref. 1; AAC37362." evidence="16" ref="1">
    <original>D</original>
    <variation>V</variation>
    <location>
        <position position="429"/>
    </location>
</feature>
<feature type="sequence conflict" description="In Ref. 1; AAC37362." evidence="16" ref="1">
    <original>E</original>
    <variation>K</variation>
    <location>
        <position position="549"/>
    </location>
</feature>
<feature type="sequence conflict" description="In Ref. 1; AAC37362." evidence="16" ref="1">
    <original>A</original>
    <variation>P</variation>
    <location>
        <position position="608"/>
    </location>
</feature>
<reference key="1">
    <citation type="journal article" date="1993" name="Mol. Cell. Biol.">
        <title>HSP78 encodes a yeast mitochondrial heat shock protein in the Clp family of ATP-dependent proteases.</title>
        <authorList>
            <person name="Leonhardt S.A."/>
            <person name="Fearon K."/>
            <person name="Danese P.N."/>
            <person name="Mason T.L."/>
        </authorList>
    </citation>
    <scope>NUCLEOTIDE SEQUENCE [GENOMIC DNA]</scope>
    <scope>SUBCELLULAR LOCATION</scope>
    <scope>INDUCTION</scope>
</reference>
<reference key="2">
    <citation type="journal article" date="1997" name="Nature">
        <title>The nucleotide sequence of Saccharomyces cerevisiae chromosome IV.</title>
        <authorList>
            <person name="Jacq C."/>
            <person name="Alt-Moerbe J."/>
            <person name="Andre B."/>
            <person name="Arnold W."/>
            <person name="Bahr A."/>
            <person name="Ballesta J.P.G."/>
            <person name="Bargues M."/>
            <person name="Baron L."/>
            <person name="Becker A."/>
            <person name="Biteau N."/>
            <person name="Bloecker H."/>
            <person name="Blugeon C."/>
            <person name="Boskovic J."/>
            <person name="Brandt P."/>
            <person name="Brueckner M."/>
            <person name="Buitrago M.J."/>
            <person name="Coster F."/>
            <person name="Delaveau T."/>
            <person name="del Rey F."/>
            <person name="Dujon B."/>
            <person name="Eide L.G."/>
            <person name="Garcia-Cantalejo J.M."/>
            <person name="Goffeau A."/>
            <person name="Gomez-Peris A."/>
            <person name="Granotier C."/>
            <person name="Hanemann V."/>
            <person name="Hankeln T."/>
            <person name="Hoheisel J.D."/>
            <person name="Jaeger W."/>
            <person name="Jimenez A."/>
            <person name="Jonniaux J.-L."/>
            <person name="Kraemer C."/>
            <person name="Kuester H."/>
            <person name="Laamanen P."/>
            <person name="Legros Y."/>
            <person name="Louis E.J."/>
            <person name="Moeller-Rieker S."/>
            <person name="Monnet A."/>
            <person name="Moro M."/>
            <person name="Mueller-Auer S."/>
            <person name="Nussbaumer B."/>
            <person name="Paricio N."/>
            <person name="Paulin L."/>
            <person name="Perea J."/>
            <person name="Perez-Alonso M."/>
            <person name="Perez-Ortin J.E."/>
            <person name="Pohl T.M."/>
            <person name="Prydz H."/>
            <person name="Purnelle B."/>
            <person name="Rasmussen S.W."/>
            <person name="Remacha M.A."/>
            <person name="Revuelta J.L."/>
            <person name="Rieger M."/>
            <person name="Salom D."/>
            <person name="Saluz H.P."/>
            <person name="Saiz J.E."/>
            <person name="Saren A.-M."/>
            <person name="Schaefer M."/>
            <person name="Scharfe M."/>
            <person name="Schmidt E.R."/>
            <person name="Schneider C."/>
            <person name="Scholler P."/>
            <person name="Schwarz S."/>
            <person name="Soler-Mira A."/>
            <person name="Urrestarazu L.A."/>
            <person name="Verhasselt P."/>
            <person name="Vissers S."/>
            <person name="Voet M."/>
            <person name="Volckaert G."/>
            <person name="Wagner G."/>
            <person name="Wambutt R."/>
            <person name="Wedler E."/>
            <person name="Wedler H."/>
            <person name="Woelfl S."/>
            <person name="Harris D.E."/>
            <person name="Bowman S."/>
            <person name="Brown D."/>
            <person name="Churcher C.M."/>
            <person name="Connor R."/>
            <person name="Dedman K."/>
            <person name="Gentles S."/>
            <person name="Hamlin N."/>
            <person name="Hunt S."/>
            <person name="Jones L."/>
            <person name="McDonald S."/>
            <person name="Murphy L.D."/>
            <person name="Niblett D."/>
            <person name="Odell C."/>
            <person name="Oliver K."/>
            <person name="Rajandream M.A."/>
            <person name="Richards C."/>
            <person name="Shore L."/>
            <person name="Walsh S.V."/>
            <person name="Barrell B.G."/>
            <person name="Dietrich F.S."/>
            <person name="Mulligan J.T."/>
            <person name="Allen E."/>
            <person name="Araujo R."/>
            <person name="Aviles E."/>
            <person name="Berno A."/>
            <person name="Carpenter J."/>
            <person name="Chen E."/>
            <person name="Cherry J.M."/>
            <person name="Chung E."/>
            <person name="Duncan M."/>
            <person name="Hunicke-Smith S."/>
            <person name="Hyman R.W."/>
            <person name="Komp C."/>
            <person name="Lashkari D."/>
            <person name="Lew H."/>
            <person name="Lin D."/>
            <person name="Mosedale D."/>
            <person name="Nakahara K."/>
            <person name="Namath A."/>
            <person name="Oefner P."/>
            <person name="Oh C."/>
            <person name="Petel F.X."/>
            <person name="Roberts D."/>
            <person name="Schramm S."/>
            <person name="Schroeder M."/>
            <person name="Shogren T."/>
            <person name="Shroff N."/>
            <person name="Winant A."/>
            <person name="Yelton M.A."/>
            <person name="Botstein D."/>
            <person name="Davis R.W."/>
            <person name="Johnston M."/>
            <person name="Andrews S."/>
            <person name="Brinkman R."/>
            <person name="Cooper J."/>
            <person name="Ding H."/>
            <person name="Du Z."/>
            <person name="Favello A."/>
            <person name="Fulton L."/>
            <person name="Gattung S."/>
            <person name="Greco T."/>
            <person name="Hallsworth K."/>
            <person name="Hawkins J."/>
            <person name="Hillier L.W."/>
            <person name="Jier M."/>
            <person name="Johnson D."/>
            <person name="Johnston L."/>
            <person name="Kirsten J."/>
            <person name="Kucaba T."/>
            <person name="Langston Y."/>
            <person name="Latreille P."/>
            <person name="Le T."/>
            <person name="Mardis E."/>
            <person name="Menezes S."/>
            <person name="Miller N."/>
            <person name="Nhan M."/>
            <person name="Pauley A."/>
            <person name="Peluso D."/>
            <person name="Rifkin L."/>
            <person name="Riles L."/>
            <person name="Taich A."/>
            <person name="Trevaskis E."/>
            <person name="Vignati D."/>
            <person name="Wilcox L."/>
            <person name="Wohldman P."/>
            <person name="Vaudin M."/>
            <person name="Wilson R."/>
            <person name="Waterston R."/>
            <person name="Albermann K."/>
            <person name="Hani J."/>
            <person name="Heumann K."/>
            <person name="Kleine K."/>
            <person name="Mewes H.-W."/>
            <person name="Zollner A."/>
            <person name="Zaccaria P."/>
        </authorList>
    </citation>
    <scope>NUCLEOTIDE SEQUENCE [LARGE SCALE GENOMIC DNA]</scope>
    <source>
        <strain>ATCC 204508 / S288c</strain>
    </source>
</reference>
<reference key="3">
    <citation type="journal article" date="2014" name="G3 (Bethesda)">
        <title>The reference genome sequence of Saccharomyces cerevisiae: Then and now.</title>
        <authorList>
            <person name="Engel S.R."/>
            <person name="Dietrich F.S."/>
            <person name="Fisk D.G."/>
            <person name="Binkley G."/>
            <person name="Balakrishnan R."/>
            <person name="Costanzo M.C."/>
            <person name="Dwight S.S."/>
            <person name="Hitz B.C."/>
            <person name="Karra K."/>
            <person name="Nash R.S."/>
            <person name="Weng S."/>
            <person name="Wong E.D."/>
            <person name="Lloyd P."/>
            <person name="Skrzypek M.S."/>
            <person name="Miyasato S.R."/>
            <person name="Simison M."/>
            <person name="Cherry J.M."/>
        </authorList>
    </citation>
    <scope>GENOME REANNOTATION</scope>
    <source>
        <strain>ATCC 204508 / S288c</strain>
    </source>
</reference>
<reference key="4">
    <citation type="journal article" date="2001" name="FEBS Lett.">
        <title>Mitochondrial Hsp78, a member of the Clp/Hsp100 family in Saccharomyces cerevisiae, cooperates with Hsp70 in protein refolding.</title>
        <authorList>
            <person name="Krzewska J."/>
            <person name="Langer T."/>
            <person name="Liberek K."/>
        </authorList>
    </citation>
    <scope>PROTEIN SEQUENCE OF 85-90</scope>
    <scope>FUNCTION</scope>
</reference>
<reference key="5">
    <citation type="journal article" date="1995" name="EMBO J.">
        <title>Hsp78, a Clp homologue within mitochondria, can substitute for chaperone functions of mt-hsp70.</title>
        <authorList>
            <person name="Schmitt M."/>
            <person name="Neupert W."/>
            <person name="Langer T."/>
        </authorList>
    </citation>
    <scope>FUNCTION</scope>
</reference>
<reference key="6">
    <citation type="journal article" date="1995" name="J. Mol. Biol.">
        <title>The mitochondrial ClpB homolog Hsp78 cooperates with matrix Hsp70 in maintenance of mitochondrial function.</title>
        <authorList>
            <person name="Moczko M."/>
            <person name="Schoenfisch B."/>
            <person name="Voos W."/>
            <person name="Pfanner N."/>
            <person name="Rassow J."/>
        </authorList>
    </citation>
    <scope>FUNCTION</scope>
</reference>
<reference key="7">
    <citation type="journal article" date="1996" name="J. Cell Biol.">
        <title>The molecular chaperone Hsp78 confers compartment-specific thermotolerance to mitochondria.</title>
        <authorList>
            <person name="Schmitt M."/>
            <person name="Neupert W."/>
            <person name="Langer T."/>
        </authorList>
    </citation>
    <scope>FUNCTION</scope>
    <scope>SUBCELLULAR LOCATION</scope>
</reference>
<reference key="8">
    <citation type="journal article" date="2001" name="J. Mol. Biol.">
        <title>Importance of two ATP-binding sites for oligomerization, ATPase activity and chaperone function of mitochondrial Hsp78 protein.</title>
        <authorList>
            <person name="Krzewska J."/>
            <person name="Konopa G."/>
            <person name="Liberek K."/>
        </authorList>
    </citation>
    <scope>FUNCTION</scope>
    <scope>SUBUNIT</scope>
    <scope>ELECTRON MICROSCOPY</scope>
    <scope>MUTAGENESIS OF LYS-149 AND LYS-547</scope>
</reference>
<reference key="9">
    <citation type="journal article" date="2002" name="J. Biol. Chem.">
        <title>A bichaperone (Hsp70-Hsp78) system restores mitochondrial DNA synthesis following thermal inactivation of Mip1p polymerase.</title>
        <authorList>
            <person name="Germaniuk A."/>
            <person name="Liberek K."/>
            <person name="Marszalek J."/>
        </authorList>
    </citation>
    <scope>FUNCTION</scope>
</reference>
<reference key="10">
    <citation type="journal article" date="2002" name="J. Biol. Chem.">
        <title>The ClpB homolog Hsp78 is required for the efficient degradation of proteins in the mitochondrial matrix.</title>
        <authorList>
            <person name="Roettgers K."/>
            <person name="Zufall N."/>
            <person name="Guiard B."/>
            <person name="Voos W."/>
        </authorList>
    </citation>
    <scope>FUNCTION IN PROTEIN DEGRADATION</scope>
</reference>
<reference key="11">
    <citation type="journal article" date="2003" name="Nature">
        <title>Global analysis of protein localization in budding yeast.</title>
        <authorList>
            <person name="Huh W.-K."/>
            <person name="Falvo J.V."/>
            <person name="Gerke L.C."/>
            <person name="Carroll A.S."/>
            <person name="Howson R.W."/>
            <person name="Weissman J.S."/>
            <person name="O'Shea E.K."/>
        </authorList>
    </citation>
    <scope>SUBCELLULAR LOCATION [LARGE SCALE ANALYSIS]</scope>
</reference>
<reference key="12">
    <citation type="journal article" date="2003" name="Nature">
        <title>Global analysis of protein expression in yeast.</title>
        <authorList>
            <person name="Ghaemmaghami S."/>
            <person name="Huh W.-K."/>
            <person name="Bower K."/>
            <person name="Howson R.W."/>
            <person name="Belle A."/>
            <person name="Dephoure N."/>
            <person name="O'Shea E.K."/>
            <person name="Weissman J.S."/>
        </authorList>
    </citation>
    <scope>LEVEL OF PROTEIN EXPRESSION [LARGE SCALE ANALYSIS]</scope>
</reference>
<reference key="13">
    <citation type="journal article" date="2003" name="Proc. Natl. Acad. Sci. U.S.A.">
        <title>The proteome of Saccharomyces cerevisiae mitochondria.</title>
        <authorList>
            <person name="Sickmann A."/>
            <person name="Reinders J."/>
            <person name="Wagner Y."/>
            <person name="Joppich C."/>
            <person name="Zahedi R.P."/>
            <person name="Meyer H.E."/>
            <person name="Schoenfisch B."/>
            <person name="Perschil I."/>
            <person name="Chacinska A."/>
            <person name="Guiard B."/>
            <person name="Rehling P."/>
            <person name="Pfanner N."/>
            <person name="Meisinger C."/>
        </authorList>
    </citation>
    <scope>SUBCELLULAR LOCATION [LARGE SCALE ANALYSIS]</scope>
    <source>
        <strain>ATCC 76625 / YPH499</strain>
    </source>
</reference>
<reference key="14">
    <citation type="journal article" date="2005" name="Eukaryot. Cell">
        <title>Regulation and recovery of functions of Saccharomyces cerevisiae chaperone BiP/Kar2p after thermal insult.</title>
        <authorList>
            <person name="Seppae L."/>
            <person name="Makarow M."/>
        </authorList>
    </citation>
    <scope>INDUCTION</scope>
</reference>
<reference key="15">
    <citation type="journal article" date="2006" name="Biochim. Biophys. Acta">
        <title>Hsp78 chaperone functions in restoration of mitochondrial network following heat stress.</title>
        <authorList>
            <person name="Lewandowska A."/>
            <person name="Gierszewska M."/>
            <person name="Marszalek J."/>
            <person name="Liberek K."/>
        </authorList>
    </citation>
    <scope>FUNCTION</scope>
</reference>
<reference key="16">
    <citation type="journal article" date="2006" name="J. Mol. Biol.">
        <title>The disaggregation activity of the mitochondrial ClpB homolog Hsp78 maintains Hsp70 function during heat stress.</title>
        <authorList>
            <person name="von Janowsky B."/>
            <person name="Major T."/>
            <person name="Knapp K."/>
            <person name="Voos W."/>
        </authorList>
    </citation>
    <scope>FUNCTION</scope>
</reference>
<protein>
    <recommendedName>
        <fullName>Heat shock protein 78, mitochondrial</fullName>
    </recommendedName>
</protein>
<name>HSP78_YEAST</name>
<comment type="function">
    <text evidence="2 3 4 5 10 11 12 13 15">Required, in concert with mitochondrial Hsp70 (SSC1), for the dissociation, resolubilization and refolding of aggregates of damaged proteins in the mitochondrial matrix after heat stress. May extract proteins from aggregates by unfolding and threading them in an ATP-dependent process through the axial channel of the protein hexamer, after which they can be refolded by the Hsp70 chaperone system. Required for resumption of mitochondrial respiratory function, DNA synthesis and morphology after heat stress. Its main role may be maintaining the molecular chaperone SSC1 in a soluble and functional state. Also required for the efficient degradation of proteins by matrix protease PIM1, independent on its protein remodeling activity.</text>
</comment>
<comment type="subunit">
    <text evidence="3">Homohexamer, forming a ring with a central pore. The hexamer is stabilized by high protein concentrations and by ADP or ATP. Oligomerization influences ATP hydrolysis activity.</text>
</comment>
<comment type="interaction">
    <interactant intactId="EBI-8680">
        <id>P33416</id>
    </interactant>
    <interactant intactId="EBI-8591">
        <id>P10591</id>
        <label>SSA1</label>
    </interactant>
    <organismsDiffer>false</organismsDiffer>
    <experiments>2</experiments>
</comment>
<comment type="subcellular location">
    <subcellularLocation>
        <location evidence="6 8 14 15">Mitochondrion matrix</location>
    </subcellularLocation>
</comment>
<comment type="induction">
    <text evidence="9 14">By heat stress. Expressed at a higher level in respiring cells than in fermenting cells (at protein level).</text>
</comment>
<comment type="domain">
    <text>Has 2 AAA ATPase type nucleotide-binding domains (NBDs) per monomer. NBD1 is primarily responsible for ATP hydrolysis. NBD2 is crucial for oligomerization.</text>
</comment>
<comment type="miscellaneous">
    <text evidence="7">Present with 2990 molecules/cell in log phase SD medium.</text>
</comment>
<comment type="similarity">
    <text evidence="16">Belongs to the ClpA/ClpB family.</text>
</comment>
<evidence type="ECO:0000255" key="1"/>
<evidence type="ECO:0000269" key="2">
    <source>
    </source>
</evidence>
<evidence type="ECO:0000269" key="3">
    <source>
    </source>
</evidence>
<evidence type="ECO:0000269" key="4">
    <source>
    </source>
</evidence>
<evidence type="ECO:0000269" key="5">
    <source>
    </source>
</evidence>
<evidence type="ECO:0000269" key="6">
    <source>
    </source>
</evidence>
<evidence type="ECO:0000269" key="7">
    <source>
    </source>
</evidence>
<evidence type="ECO:0000269" key="8">
    <source>
    </source>
</evidence>
<evidence type="ECO:0000269" key="9">
    <source>
    </source>
</evidence>
<evidence type="ECO:0000269" key="10">
    <source>
    </source>
</evidence>
<evidence type="ECO:0000269" key="11">
    <source>
    </source>
</evidence>
<evidence type="ECO:0000269" key="12">
    <source>
    </source>
</evidence>
<evidence type="ECO:0000269" key="13">
    <source>
    </source>
</evidence>
<evidence type="ECO:0000269" key="14">
    <source>
    </source>
</evidence>
<evidence type="ECO:0000269" key="15">
    <source>
    </source>
</evidence>
<evidence type="ECO:0000305" key="16"/>